<organism>
    <name type="scientific">Clostridium botulinum (strain Kyoto / Type A2)</name>
    <dbReference type="NCBI Taxonomy" id="536232"/>
    <lineage>
        <taxon>Bacteria</taxon>
        <taxon>Bacillati</taxon>
        <taxon>Bacillota</taxon>
        <taxon>Clostridia</taxon>
        <taxon>Eubacteriales</taxon>
        <taxon>Clostridiaceae</taxon>
        <taxon>Clostridium</taxon>
    </lineage>
</organism>
<dbReference type="EC" id="2.1.1.177" evidence="1"/>
<dbReference type="EMBL" id="CP001581">
    <property type="protein sequence ID" value="ACO83458.1"/>
    <property type="molecule type" value="Genomic_DNA"/>
</dbReference>
<dbReference type="RefSeq" id="WP_003359360.1">
    <property type="nucleotide sequence ID" value="NC_012563.1"/>
</dbReference>
<dbReference type="SMR" id="C1FNH5"/>
<dbReference type="KEGG" id="cby:CLM_4062"/>
<dbReference type="eggNOG" id="COG1576">
    <property type="taxonomic scope" value="Bacteria"/>
</dbReference>
<dbReference type="HOGENOM" id="CLU_100552_0_0_9"/>
<dbReference type="Proteomes" id="UP000001374">
    <property type="component" value="Chromosome"/>
</dbReference>
<dbReference type="GO" id="GO:0005737">
    <property type="term" value="C:cytoplasm"/>
    <property type="evidence" value="ECO:0007669"/>
    <property type="project" value="UniProtKB-SubCell"/>
</dbReference>
<dbReference type="GO" id="GO:0070038">
    <property type="term" value="F:rRNA (pseudouridine-N3-)-methyltransferase activity"/>
    <property type="evidence" value="ECO:0007669"/>
    <property type="project" value="UniProtKB-UniRule"/>
</dbReference>
<dbReference type="CDD" id="cd18081">
    <property type="entry name" value="RlmH-like"/>
    <property type="match status" value="1"/>
</dbReference>
<dbReference type="Gene3D" id="3.40.1280.10">
    <property type="match status" value="1"/>
</dbReference>
<dbReference type="HAMAP" id="MF_00658">
    <property type="entry name" value="23SrRNA_methyltr_H"/>
    <property type="match status" value="1"/>
</dbReference>
<dbReference type="InterPro" id="IPR029028">
    <property type="entry name" value="Alpha/beta_knot_MTases"/>
</dbReference>
<dbReference type="InterPro" id="IPR003742">
    <property type="entry name" value="RlmH-like"/>
</dbReference>
<dbReference type="InterPro" id="IPR029026">
    <property type="entry name" value="tRNA_m1G_MTases_N"/>
</dbReference>
<dbReference type="NCBIfam" id="NF000985">
    <property type="entry name" value="PRK00103.1-3"/>
    <property type="match status" value="1"/>
</dbReference>
<dbReference type="NCBIfam" id="TIGR00246">
    <property type="entry name" value="tRNA_RlmH_YbeA"/>
    <property type="match status" value="1"/>
</dbReference>
<dbReference type="PANTHER" id="PTHR33603">
    <property type="entry name" value="METHYLTRANSFERASE"/>
    <property type="match status" value="1"/>
</dbReference>
<dbReference type="PANTHER" id="PTHR33603:SF1">
    <property type="entry name" value="RIBOSOMAL RNA LARGE SUBUNIT METHYLTRANSFERASE H"/>
    <property type="match status" value="1"/>
</dbReference>
<dbReference type="Pfam" id="PF02590">
    <property type="entry name" value="SPOUT_MTase"/>
    <property type="match status" value="1"/>
</dbReference>
<dbReference type="PIRSF" id="PIRSF004505">
    <property type="entry name" value="MT_bac"/>
    <property type="match status" value="1"/>
</dbReference>
<dbReference type="SUPFAM" id="SSF75217">
    <property type="entry name" value="alpha/beta knot"/>
    <property type="match status" value="1"/>
</dbReference>
<comment type="function">
    <text evidence="1">Specifically methylates the pseudouridine at position 1915 (m3Psi1915) in 23S rRNA.</text>
</comment>
<comment type="catalytic activity">
    <reaction evidence="1">
        <text>pseudouridine(1915) in 23S rRNA + S-adenosyl-L-methionine = N(3)-methylpseudouridine(1915) in 23S rRNA + S-adenosyl-L-homocysteine + H(+)</text>
        <dbReference type="Rhea" id="RHEA:42752"/>
        <dbReference type="Rhea" id="RHEA-COMP:10221"/>
        <dbReference type="Rhea" id="RHEA-COMP:10222"/>
        <dbReference type="ChEBI" id="CHEBI:15378"/>
        <dbReference type="ChEBI" id="CHEBI:57856"/>
        <dbReference type="ChEBI" id="CHEBI:59789"/>
        <dbReference type="ChEBI" id="CHEBI:65314"/>
        <dbReference type="ChEBI" id="CHEBI:74486"/>
        <dbReference type="EC" id="2.1.1.177"/>
    </reaction>
</comment>
<comment type="subunit">
    <text evidence="1">Homodimer.</text>
</comment>
<comment type="subcellular location">
    <subcellularLocation>
        <location evidence="1">Cytoplasm</location>
    </subcellularLocation>
</comment>
<comment type="similarity">
    <text evidence="1">Belongs to the RNA methyltransferase RlmH family.</text>
</comment>
<keyword id="KW-0963">Cytoplasm</keyword>
<keyword id="KW-0489">Methyltransferase</keyword>
<keyword id="KW-0698">rRNA processing</keyword>
<keyword id="KW-0949">S-adenosyl-L-methionine</keyword>
<keyword id="KW-0808">Transferase</keyword>
<feature type="chain" id="PRO_1000199816" description="Ribosomal RNA large subunit methyltransferase H">
    <location>
        <begin position="1"/>
        <end position="159"/>
    </location>
</feature>
<feature type="binding site" evidence="1">
    <location>
        <position position="76"/>
    </location>
    <ligand>
        <name>S-adenosyl-L-methionine</name>
        <dbReference type="ChEBI" id="CHEBI:59789"/>
    </ligand>
</feature>
<feature type="binding site" evidence="1">
    <location>
        <position position="108"/>
    </location>
    <ligand>
        <name>S-adenosyl-L-methionine</name>
        <dbReference type="ChEBI" id="CHEBI:59789"/>
    </ligand>
</feature>
<feature type="binding site" evidence="1">
    <location>
        <begin position="127"/>
        <end position="132"/>
    </location>
    <ligand>
        <name>S-adenosyl-L-methionine</name>
        <dbReference type="ChEBI" id="CHEBI:59789"/>
    </ligand>
</feature>
<gene>
    <name evidence="1" type="primary">rlmH</name>
    <name type="ordered locus">CLM_4062</name>
</gene>
<evidence type="ECO:0000255" key="1">
    <source>
        <dbReference type="HAMAP-Rule" id="MF_00658"/>
    </source>
</evidence>
<protein>
    <recommendedName>
        <fullName evidence="1">Ribosomal RNA large subunit methyltransferase H</fullName>
        <ecNumber evidence="1">2.1.1.177</ecNumber>
    </recommendedName>
    <alternativeName>
        <fullName evidence="1">23S rRNA (pseudouridine1915-N3)-methyltransferase</fullName>
    </alternativeName>
    <alternativeName>
        <fullName evidence="1">23S rRNA m3Psi1915 methyltransferase</fullName>
    </alternativeName>
    <alternativeName>
        <fullName evidence="1">rRNA (pseudouridine-N3-)-methyltransferase RlmH</fullName>
    </alternativeName>
</protein>
<reference key="1">
    <citation type="submission" date="2008-10" db="EMBL/GenBank/DDBJ databases">
        <title>Genome sequence of Clostridium botulinum A2 Kyoto.</title>
        <authorList>
            <person name="Shrivastava S."/>
            <person name="Brinkac L.M."/>
            <person name="Brown J.L."/>
            <person name="Bruce D."/>
            <person name="Detter C.C."/>
            <person name="Johnson E.A."/>
            <person name="Munk C.A."/>
            <person name="Smith L.A."/>
            <person name="Smith T.J."/>
            <person name="Sutton G."/>
            <person name="Brettin T.S."/>
        </authorList>
    </citation>
    <scope>NUCLEOTIDE SEQUENCE [LARGE SCALE GENOMIC DNA]</scope>
    <source>
        <strain>Kyoto / Type A2</strain>
    </source>
</reference>
<proteinExistence type="inferred from homology"/>
<sequence>MNISIISVGKIKEKFLKAAIDEYSKRLSKYCKLNIIEVADEKTPDNASLKEENIIKEKEGNLILKHIKDNSFVIALDLKGKSITSEEFSDLIENCRLTGNSTIAFVIGGSLGLSEQVLSRANYKLSFSKMTFPHQLFRVMLLEQVYRAFRILCGEPYHK</sequence>
<name>RLMH_CLOBJ</name>
<accession>C1FNH5</accession>